<feature type="chain" id="PRO_0000266254" description="CTP synthase">
    <location>
        <begin position="1"/>
        <end position="542"/>
    </location>
</feature>
<feature type="domain" description="Glutamine amidotransferase type-1" evidence="1">
    <location>
        <begin position="290"/>
        <end position="541"/>
    </location>
</feature>
<feature type="region of interest" description="Amidoligase domain" evidence="1">
    <location>
        <begin position="1"/>
        <end position="265"/>
    </location>
</feature>
<feature type="active site" description="Nucleophile; for glutamine hydrolysis" evidence="1">
    <location>
        <position position="379"/>
    </location>
</feature>
<feature type="active site" evidence="1">
    <location>
        <position position="514"/>
    </location>
</feature>
<feature type="active site" evidence="1">
    <location>
        <position position="516"/>
    </location>
</feature>
<feature type="binding site" evidence="1">
    <location>
        <position position="13"/>
    </location>
    <ligand>
        <name>CTP</name>
        <dbReference type="ChEBI" id="CHEBI:37563"/>
        <note>allosteric inhibitor</note>
    </ligand>
</feature>
<feature type="binding site" evidence="1">
    <location>
        <position position="13"/>
    </location>
    <ligand>
        <name>UTP</name>
        <dbReference type="ChEBI" id="CHEBI:46398"/>
    </ligand>
</feature>
<feature type="binding site" evidence="1">
    <location>
        <begin position="14"/>
        <end position="19"/>
    </location>
    <ligand>
        <name>ATP</name>
        <dbReference type="ChEBI" id="CHEBI:30616"/>
    </ligand>
</feature>
<feature type="binding site" evidence="1">
    <location>
        <position position="71"/>
    </location>
    <ligand>
        <name>ATP</name>
        <dbReference type="ChEBI" id="CHEBI:30616"/>
    </ligand>
</feature>
<feature type="binding site" evidence="1">
    <location>
        <position position="71"/>
    </location>
    <ligand>
        <name>Mg(2+)</name>
        <dbReference type="ChEBI" id="CHEBI:18420"/>
    </ligand>
</feature>
<feature type="binding site" evidence="1">
    <location>
        <position position="139"/>
    </location>
    <ligand>
        <name>Mg(2+)</name>
        <dbReference type="ChEBI" id="CHEBI:18420"/>
    </ligand>
</feature>
<feature type="binding site" evidence="1">
    <location>
        <begin position="146"/>
        <end position="148"/>
    </location>
    <ligand>
        <name>CTP</name>
        <dbReference type="ChEBI" id="CHEBI:37563"/>
        <note>allosteric inhibitor</note>
    </ligand>
</feature>
<feature type="binding site" evidence="1">
    <location>
        <begin position="186"/>
        <end position="191"/>
    </location>
    <ligand>
        <name>CTP</name>
        <dbReference type="ChEBI" id="CHEBI:37563"/>
        <note>allosteric inhibitor</note>
    </ligand>
</feature>
<feature type="binding site" evidence="1">
    <location>
        <begin position="186"/>
        <end position="191"/>
    </location>
    <ligand>
        <name>UTP</name>
        <dbReference type="ChEBI" id="CHEBI:46398"/>
    </ligand>
</feature>
<feature type="binding site" evidence="1">
    <location>
        <position position="222"/>
    </location>
    <ligand>
        <name>CTP</name>
        <dbReference type="ChEBI" id="CHEBI:37563"/>
        <note>allosteric inhibitor</note>
    </ligand>
</feature>
<feature type="binding site" evidence="1">
    <location>
        <position position="222"/>
    </location>
    <ligand>
        <name>UTP</name>
        <dbReference type="ChEBI" id="CHEBI:46398"/>
    </ligand>
</feature>
<feature type="binding site" evidence="1">
    <location>
        <position position="352"/>
    </location>
    <ligand>
        <name>L-glutamine</name>
        <dbReference type="ChEBI" id="CHEBI:58359"/>
    </ligand>
</feature>
<feature type="binding site" evidence="1">
    <location>
        <begin position="380"/>
        <end position="383"/>
    </location>
    <ligand>
        <name>L-glutamine</name>
        <dbReference type="ChEBI" id="CHEBI:58359"/>
    </ligand>
</feature>
<feature type="binding site" evidence="1">
    <location>
        <position position="403"/>
    </location>
    <ligand>
        <name>L-glutamine</name>
        <dbReference type="ChEBI" id="CHEBI:58359"/>
    </ligand>
</feature>
<feature type="binding site" evidence="1">
    <location>
        <position position="471"/>
    </location>
    <ligand>
        <name>L-glutamine</name>
        <dbReference type="ChEBI" id="CHEBI:58359"/>
    </ligand>
</feature>
<accession>Q30NS7</accession>
<gene>
    <name evidence="1" type="primary">pyrG</name>
    <name type="ordered locus">Suden_2080</name>
</gene>
<name>PYRG_SULDN</name>
<sequence length="542" mass="59955">MTKYIFVTGGVLSSLGKGITAASIGTLLKHSGIQVGMLKIDPYINVDPGTMSPLEHGEVFVTKDGAETDLDIGNYERFLDTSYLKSSNFTTGQVYSAVIERERAGGYLGQTIQVIPHIVGEIVKRIKEAGEGHDILIVELGGTVGDIEGLPFMEAIRQMKHDDEVEGTFFVHVTLIPFIKAAGELKSKPTQHSVQELRRIGITPQMIIARSENALPKTFKKKLAMSCDVSSDSVIEALDAASIYDVPISFLRQNILKPISKELSLGELNPNMEKWDSLVKKIVQPQNRIVLGFVGKYLELKEAYKSLTEALIHAGAHLDTRVDIHWVDSEKIEERGAEALLGDCDSVLVAGGFGNRGVEGKIKAIEYARVNKIPYLGICLGMQLTLVEYARNVLGYEGANSIEFDENTPYPMIYLIDNFLDQSGNTQLRTHKSPMGGTLRLGEYPCDTLEGSIIRKAYHGEKTIHERHRHRYEANPTYRKALEDAGMIVTGESNGLIEAVEIKDHPWFLGVQFHPEFTSRLQTPNPSILAFVEATLAISQEE</sequence>
<evidence type="ECO:0000255" key="1">
    <source>
        <dbReference type="HAMAP-Rule" id="MF_01227"/>
    </source>
</evidence>
<comment type="function">
    <text evidence="1">Catalyzes the ATP-dependent amination of UTP to CTP with either L-glutamine or ammonia as the source of nitrogen. Regulates intracellular CTP levels through interactions with the four ribonucleotide triphosphates.</text>
</comment>
<comment type="catalytic activity">
    <reaction evidence="1">
        <text>UTP + L-glutamine + ATP + H2O = CTP + L-glutamate + ADP + phosphate + 2 H(+)</text>
        <dbReference type="Rhea" id="RHEA:26426"/>
        <dbReference type="ChEBI" id="CHEBI:15377"/>
        <dbReference type="ChEBI" id="CHEBI:15378"/>
        <dbReference type="ChEBI" id="CHEBI:29985"/>
        <dbReference type="ChEBI" id="CHEBI:30616"/>
        <dbReference type="ChEBI" id="CHEBI:37563"/>
        <dbReference type="ChEBI" id="CHEBI:43474"/>
        <dbReference type="ChEBI" id="CHEBI:46398"/>
        <dbReference type="ChEBI" id="CHEBI:58359"/>
        <dbReference type="ChEBI" id="CHEBI:456216"/>
        <dbReference type="EC" id="6.3.4.2"/>
    </reaction>
</comment>
<comment type="catalytic activity">
    <reaction evidence="1">
        <text>L-glutamine + H2O = L-glutamate + NH4(+)</text>
        <dbReference type="Rhea" id="RHEA:15889"/>
        <dbReference type="ChEBI" id="CHEBI:15377"/>
        <dbReference type="ChEBI" id="CHEBI:28938"/>
        <dbReference type="ChEBI" id="CHEBI:29985"/>
        <dbReference type="ChEBI" id="CHEBI:58359"/>
    </reaction>
</comment>
<comment type="catalytic activity">
    <reaction evidence="1">
        <text>UTP + NH4(+) + ATP = CTP + ADP + phosphate + 2 H(+)</text>
        <dbReference type="Rhea" id="RHEA:16597"/>
        <dbReference type="ChEBI" id="CHEBI:15378"/>
        <dbReference type="ChEBI" id="CHEBI:28938"/>
        <dbReference type="ChEBI" id="CHEBI:30616"/>
        <dbReference type="ChEBI" id="CHEBI:37563"/>
        <dbReference type="ChEBI" id="CHEBI:43474"/>
        <dbReference type="ChEBI" id="CHEBI:46398"/>
        <dbReference type="ChEBI" id="CHEBI:456216"/>
    </reaction>
</comment>
<comment type="activity regulation">
    <text evidence="1">Allosterically activated by GTP, when glutamine is the substrate; GTP has no effect on the reaction when ammonia is the substrate. The allosteric effector GTP functions by stabilizing the protein conformation that binds the tetrahedral intermediate(s) formed during glutamine hydrolysis. Inhibited by the product CTP, via allosteric rather than competitive inhibition.</text>
</comment>
<comment type="pathway">
    <text evidence="1">Pyrimidine metabolism; CTP biosynthesis via de novo pathway; CTP from UDP: step 2/2.</text>
</comment>
<comment type="subunit">
    <text evidence="1">Homotetramer.</text>
</comment>
<comment type="miscellaneous">
    <text evidence="1">CTPSs have evolved a hybrid strategy for distinguishing between UTP and CTP. The overlapping regions of the product feedback inhibitory and substrate sites recognize a common feature in both compounds, the triphosphate moiety. To differentiate isosteric substrate and product pyrimidine rings, an additional pocket far from the expected kinase/ligase catalytic site, specifically recognizes the cytosine and ribose portions of the product inhibitor.</text>
</comment>
<comment type="similarity">
    <text evidence="1">Belongs to the CTP synthase family.</text>
</comment>
<proteinExistence type="inferred from homology"/>
<dbReference type="EC" id="6.3.4.2" evidence="1"/>
<dbReference type="EMBL" id="CP000153">
    <property type="protein sequence ID" value="ABB45354.1"/>
    <property type="molecule type" value="Genomic_DNA"/>
</dbReference>
<dbReference type="RefSeq" id="WP_011373694.1">
    <property type="nucleotide sequence ID" value="NC_007575.1"/>
</dbReference>
<dbReference type="SMR" id="Q30NS7"/>
<dbReference type="STRING" id="326298.Suden_2080"/>
<dbReference type="MEROPS" id="C26.964"/>
<dbReference type="KEGG" id="tdn:Suden_2080"/>
<dbReference type="eggNOG" id="COG0504">
    <property type="taxonomic scope" value="Bacteria"/>
</dbReference>
<dbReference type="HOGENOM" id="CLU_011675_5_0_7"/>
<dbReference type="OrthoDB" id="9801107at2"/>
<dbReference type="UniPathway" id="UPA00159">
    <property type="reaction ID" value="UER00277"/>
</dbReference>
<dbReference type="Proteomes" id="UP000002714">
    <property type="component" value="Chromosome"/>
</dbReference>
<dbReference type="GO" id="GO:0005829">
    <property type="term" value="C:cytosol"/>
    <property type="evidence" value="ECO:0007669"/>
    <property type="project" value="TreeGrafter"/>
</dbReference>
<dbReference type="GO" id="GO:0005524">
    <property type="term" value="F:ATP binding"/>
    <property type="evidence" value="ECO:0007669"/>
    <property type="project" value="UniProtKB-KW"/>
</dbReference>
<dbReference type="GO" id="GO:0003883">
    <property type="term" value="F:CTP synthase activity"/>
    <property type="evidence" value="ECO:0007669"/>
    <property type="project" value="UniProtKB-UniRule"/>
</dbReference>
<dbReference type="GO" id="GO:0004359">
    <property type="term" value="F:glutaminase activity"/>
    <property type="evidence" value="ECO:0007669"/>
    <property type="project" value="RHEA"/>
</dbReference>
<dbReference type="GO" id="GO:0042802">
    <property type="term" value="F:identical protein binding"/>
    <property type="evidence" value="ECO:0007669"/>
    <property type="project" value="TreeGrafter"/>
</dbReference>
<dbReference type="GO" id="GO:0046872">
    <property type="term" value="F:metal ion binding"/>
    <property type="evidence" value="ECO:0007669"/>
    <property type="project" value="UniProtKB-KW"/>
</dbReference>
<dbReference type="GO" id="GO:0044210">
    <property type="term" value="P:'de novo' CTP biosynthetic process"/>
    <property type="evidence" value="ECO:0007669"/>
    <property type="project" value="UniProtKB-UniRule"/>
</dbReference>
<dbReference type="GO" id="GO:0019856">
    <property type="term" value="P:pyrimidine nucleobase biosynthetic process"/>
    <property type="evidence" value="ECO:0007669"/>
    <property type="project" value="TreeGrafter"/>
</dbReference>
<dbReference type="CDD" id="cd03113">
    <property type="entry name" value="CTPS_N"/>
    <property type="match status" value="1"/>
</dbReference>
<dbReference type="CDD" id="cd01746">
    <property type="entry name" value="GATase1_CTP_Synthase"/>
    <property type="match status" value="1"/>
</dbReference>
<dbReference type="FunFam" id="3.40.50.300:FF:000009">
    <property type="entry name" value="CTP synthase"/>
    <property type="match status" value="1"/>
</dbReference>
<dbReference type="FunFam" id="3.40.50.880:FF:000002">
    <property type="entry name" value="CTP synthase"/>
    <property type="match status" value="1"/>
</dbReference>
<dbReference type="Gene3D" id="3.40.50.880">
    <property type="match status" value="1"/>
</dbReference>
<dbReference type="Gene3D" id="3.40.50.300">
    <property type="entry name" value="P-loop containing nucleotide triphosphate hydrolases"/>
    <property type="match status" value="1"/>
</dbReference>
<dbReference type="HAMAP" id="MF_01227">
    <property type="entry name" value="PyrG"/>
    <property type="match status" value="1"/>
</dbReference>
<dbReference type="InterPro" id="IPR029062">
    <property type="entry name" value="Class_I_gatase-like"/>
</dbReference>
<dbReference type="InterPro" id="IPR004468">
    <property type="entry name" value="CTP_synthase"/>
</dbReference>
<dbReference type="InterPro" id="IPR017456">
    <property type="entry name" value="CTP_synthase_N"/>
</dbReference>
<dbReference type="InterPro" id="IPR017926">
    <property type="entry name" value="GATASE"/>
</dbReference>
<dbReference type="InterPro" id="IPR033828">
    <property type="entry name" value="GATase1_CTP_Synthase"/>
</dbReference>
<dbReference type="InterPro" id="IPR027417">
    <property type="entry name" value="P-loop_NTPase"/>
</dbReference>
<dbReference type="NCBIfam" id="NF003792">
    <property type="entry name" value="PRK05380.1"/>
    <property type="match status" value="1"/>
</dbReference>
<dbReference type="NCBIfam" id="TIGR00337">
    <property type="entry name" value="PyrG"/>
    <property type="match status" value="1"/>
</dbReference>
<dbReference type="PANTHER" id="PTHR11550">
    <property type="entry name" value="CTP SYNTHASE"/>
    <property type="match status" value="1"/>
</dbReference>
<dbReference type="PANTHER" id="PTHR11550:SF0">
    <property type="entry name" value="CTP SYNTHASE-RELATED"/>
    <property type="match status" value="1"/>
</dbReference>
<dbReference type="Pfam" id="PF06418">
    <property type="entry name" value="CTP_synth_N"/>
    <property type="match status" value="1"/>
</dbReference>
<dbReference type="Pfam" id="PF00117">
    <property type="entry name" value="GATase"/>
    <property type="match status" value="1"/>
</dbReference>
<dbReference type="SUPFAM" id="SSF52317">
    <property type="entry name" value="Class I glutamine amidotransferase-like"/>
    <property type="match status" value="1"/>
</dbReference>
<dbReference type="SUPFAM" id="SSF52540">
    <property type="entry name" value="P-loop containing nucleoside triphosphate hydrolases"/>
    <property type="match status" value="1"/>
</dbReference>
<dbReference type="PROSITE" id="PS51273">
    <property type="entry name" value="GATASE_TYPE_1"/>
    <property type="match status" value="1"/>
</dbReference>
<keyword id="KW-0067">ATP-binding</keyword>
<keyword id="KW-0315">Glutamine amidotransferase</keyword>
<keyword id="KW-0436">Ligase</keyword>
<keyword id="KW-0460">Magnesium</keyword>
<keyword id="KW-0479">Metal-binding</keyword>
<keyword id="KW-0547">Nucleotide-binding</keyword>
<keyword id="KW-0665">Pyrimidine biosynthesis</keyword>
<keyword id="KW-1185">Reference proteome</keyword>
<reference key="1">
    <citation type="journal article" date="2008" name="Appl. Environ. Microbiol.">
        <title>Genome of the epsilonproteobacterial chemolithoautotroph Sulfurimonas denitrificans.</title>
        <authorList>
            <person name="Sievert S.M."/>
            <person name="Scott K.M."/>
            <person name="Klotz M.G."/>
            <person name="Chain P.S.G."/>
            <person name="Hauser L.J."/>
            <person name="Hemp J."/>
            <person name="Huegler M."/>
            <person name="Land M."/>
            <person name="Lapidus A."/>
            <person name="Larimer F.W."/>
            <person name="Lucas S."/>
            <person name="Malfatti S.A."/>
            <person name="Meyer F."/>
            <person name="Paulsen I.T."/>
            <person name="Ren Q."/>
            <person name="Simon J."/>
            <person name="Bailey K."/>
            <person name="Diaz E."/>
            <person name="Fitzpatrick K.A."/>
            <person name="Glover B."/>
            <person name="Gwatney N."/>
            <person name="Korajkic A."/>
            <person name="Long A."/>
            <person name="Mobberley J.M."/>
            <person name="Pantry S.N."/>
            <person name="Pazder G."/>
            <person name="Peterson S."/>
            <person name="Quintanilla J.D."/>
            <person name="Sprinkle R."/>
            <person name="Stephens J."/>
            <person name="Thomas P."/>
            <person name="Vaughn R."/>
            <person name="Weber M.J."/>
            <person name="Wooten L.L."/>
        </authorList>
    </citation>
    <scope>NUCLEOTIDE SEQUENCE [LARGE SCALE GENOMIC DNA]</scope>
    <source>
        <strain>ATCC 33889 / DSM 1251</strain>
    </source>
</reference>
<protein>
    <recommendedName>
        <fullName evidence="1">CTP synthase</fullName>
        <ecNumber evidence="1">6.3.4.2</ecNumber>
    </recommendedName>
    <alternativeName>
        <fullName evidence="1">Cytidine 5'-triphosphate synthase</fullName>
    </alternativeName>
    <alternativeName>
        <fullName evidence="1">Cytidine triphosphate synthetase</fullName>
        <shortName evidence="1">CTP synthetase</shortName>
        <shortName evidence="1">CTPS</shortName>
    </alternativeName>
    <alternativeName>
        <fullName evidence="1">UTP--ammonia ligase</fullName>
    </alternativeName>
</protein>
<organism>
    <name type="scientific">Sulfurimonas denitrificans (strain ATCC 33889 / DSM 1251)</name>
    <name type="common">Thiomicrospira denitrificans (strain ATCC 33889 / DSM 1251)</name>
    <dbReference type="NCBI Taxonomy" id="326298"/>
    <lineage>
        <taxon>Bacteria</taxon>
        <taxon>Pseudomonadati</taxon>
        <taxon>Campylobacterota</taxon>
        <taxon>Epsilonproteobacteria</taxon>
        <taxon>Campylobacterales</taxon>
        <taxon>Sulfurimonadaceae</taxon>
        <taxon>Sulfurimonas</taxon>
    </lineage>
</organism>